<protein>
    <recommendedName>
        <fullName evidence="1">ATP synthase subunit beta</fullName>
        <ecNumber evidence="1">7.1.2.2</ecNumber>
    </recommendedName>
    <alternativeName>
        <fullName evidence="1">ATP synthase F1 sector subunit beta</fullName>
    </alternativeName>
    <alternativeName>
        <fullName evidence="1">F-ATPase subunit beta</fullName>
    </alternativeName>
</protein>
<organism>
    <name type="scientific">Psychrobacter cryohalolentis (strain ATCC BAA-1226 / DSM 17306 / VKM B-2378 / K5)</name>
    <dbReference type="NCBI Taxonomy" id="335284"/>
    <lineage>
        <taxon>Bacteria</taxon>
        <taxon>Pseudomonadati</taxon>
        <taxon>Pseudomonadota</taxon>
        <taxon>Gammaproteobacteria</taxon>
        <taxon>Moraxellales</taxon>
        <taxon>Moraxellaceae</taxon>
        <taxon>Psychrobacter</taxon>
    </lineage>
</organism>
<reference key="1">
    <citation type="submission" date="2006-03" db="EMBL/GenBank/DDBJ databases">
        <title>Complete sequence of chromosome of Psychrobacter cryohalolentis K5.</title>
        <authorList>
            <consortium name="US DOE Joint Genome Institute"/>
            <person name="Copeland A."/>
            <person name="Lucas S."/>
            <person name="Lapidus A."/>
            <person name="Barry K."/>
            <person name="Detter J.C."/>
            <person name="Glavina T."/>
            <person name="Hammon N."/>
            <person name="Israni S."/>
            <person name="Dalin E."/>
            <person name="Tice H."/>
            <person name="Pitluck S."/>
            <person name="Brettin T."/>
            <person name="Bruce D."/>
            <person name="Han C."/>
            <person name="Tapia R."/>
            <person name="Sims D.R."/>
            <person name="Gilna P."/>
            <person name="Schmutz J."/>
            <person name="Larimer F."/>
            <person name="Land M."/>
            <person name="Hauser L."/>
            <person name="Kyrpides N."/>
            <person name="Kim E."/>
            <person name="Richardson P."/>
        </authorList>
    </citation>
    <scope>NUCLEOTIDE SEQUENCE [LARGE SCALE GENOMIC DNA]</scope>
    <source>
        <strain>ATCC BAA-1226 / DSM 17306 / VKM B-2378 / K5</strain>
    </source>
</reference>
<gene>
    <name evidence="1" type="primary">atpD</name>
    <name type="ordered locus">Pcryo_2327</name>
</gene>
<keyword id="KW-0066">ATP synthesis</keyword>
<keyword id="KW-0067">ATP-binding</keyword>
<keyword id="KW-0997">Cell inner membrane</keyword>
<keyword id="KW-1003">Cell membrane</keyword>
<keyword id="KW-0139">CF(1)</keyword>
<keyword id="KW-0375">Hydrogen ion transport</keyword>
<keyword id="KW-0406">Ion transport</keyword>
<keyword id="KW-0472">Membrane</keyword>
<keyword id="KW-0547">Nucleotide-binding</keyword>
<keyword id="KW-1278">Translocase</keyword>
<keyword id="KW-0813">Transport</keyword>
<name>ATPB_PSYCK</name>
<comment type="function">
    <text evidence="1">Produces ATP from ADP in the presence of a proton gradient across the membrane. The catalytic sites are hosted primarily by the beta subunits.</text>
</comment>
<comment type="catalytic activity">
    <reaction evidence="1">
        <text>ATP + H2O + 4 H(+)(in) = ADP + phosphate + 5 H(+)(out)</text>
        <dbReference type="Rhea" id="RHEA:57720"/>
        <dbReference type="ChEBI" id="CHEBI:15377"/>
        <dbReference type="ChEBI" id="CHEBI:15378"/>
        <dbReference type="ChEBI" id="CHEBI:30616"/>
        <dbReference type="ChEBI" id="CHEBI:43474"/>
        <dbReference type="ChEBI" id="CHEBI:456216"/>
        <dbReference type="EC" id="7.1.2.2"/>
    </reaction>
</comment>
<comment type="subunit">
    <text evidence="1">F-type ATPases have 2 components, CF(1) - the catalytic core - and CF(0) - the membrane proton channel. CF(1) has five subunits: alpha(3), beta(3), gamma(1), delta(1), epsilon(1). CF(0) has three main subunits: a(1), b(2) and c(9-12). The alpha and beta chains form an alternating ring which encloses part of the gamma chain. CF(1) is attached to CF(0) by a central stalk formed by the gamma and epsilon chains, while a peripheral stalk is formed by the delta and b chains.</text>
</comment>
<comment type="subcellular location">
    <subcellularLocation>
        <location evidence="1">Cell inner membrane</location>
        <topology evidence="1">Peripheral membrane protein</topology>
    </subcellularLocation>
</comment>
<comment type="similarity">
    <text evidence="1">Belongs to the ATPase alpha/beta chains family.</text>
</comment>
<sequence>MSSGRIVQIIGAVLDVEFNRNEVPKIFDALLVDGTETTLEVQQQLGDGIVRTIAMGSTEGLKRNLPVTNTGGPISVPVGIGTLGRIMDVLGRPIDEEGPVQADERWSIHREAPSYAEQSNSTELLETGIKVIDLLCPFAKGGKVGLFGGAGVGKTVNMMELINNIALKHEGLSVFAGVGERTREGNDFYHEMQEAGVVNTEDFSKSKVAMVYGQMNEPPGNRLRVALSGLTMAEYFRDTKDPATGKGRDVLLFVDNIYRYTLAGTEVSALLGRMPSAVGYQPTLAEEMGMLQERITSTQSGSITSVQAVYVPADDLTDPSPATTFAHLDATVVLSRDIASQGIYPAVDPLDSTSRQLDPLVIGEEHYNVARGVQEVLQRYKELKDIIAILGMDELSEEDKLVVYRARKIQRFLSQPFHVAEVFTGAPGKYVPLRDTIASFKAIIAGEYDSLPEQAFYMAGGIDEVVAKAEKMKSSAA</sequence>
<accession>Q1Q899</accession>
<dbReference type="EC" id="7.1.2.2" evidence="1"/>
<dbReference type="EMBL" id="CP000323">
    <property type="protein sequence ID" value="ABE76104.1"/>
    <property type="molecule type" value="Genomic_DNA"/>
</dbReference>
<dbReference type="RefSeq" id="WP_011514633.1">
    <property type="nucleotide sequence ID" value="NC_007969.1"/>
</dbReference>
<dbReference type="SMR" id="Q1Q899"/>
<dbReference type="STRING" id="335284.Pcryo_2327"/>
<dbReference type="KEGG" id="pcr:Pcryo_2327"/>
<dbReference type="eggNOG" id="COG0055">
    <property type="taxonomic scope" value="Bacteria"/>
</dbReference>
<dbReference type="HOGENOM" id="CLU_022398_0_2_6"/>
<dbReference type="Proteomes" id="UP000002425">
    <property type="component" value="Chromosome"/>
</dbReference>
<dbReference type="GO" id="GO:0005886">
    <property type="term" value="C:plasma membrane"/>
    <property type="evidence" value="ECO:0007669"/>
    <property type="project" value="UniProtKB-SubCell"/>
</dbReference>
<dbReference type="GO" id="GO:0045259">
    <property type="term" value="C:proton-transporting ATP synthase complex"/>
    <property type="evidence" value="ECO:0007669"/>
    <property type="project" value="UniProtKB-KW"/>
</dbReference>
<dbReference type="GO" id="GO:0005524">
    <property type="term" value="F:ATP binding"/>
    <property type="evidence" value="ECO:0007669"/>
    <property type="project" value="UniProtKB-UniRule"/>
</dbReference>
<dbReference type="GO" id="GO:0016887">
    <property type="term" value="F:ATP hydrolysis activity"/>
    <property type="evidence" value="ECO:0007669"/>
    <property type="project" value="InterPro"/>
</dbReference>
<dbReference type="GO" id="GO:0046933">
    <property type="term" value="F:proton-transporting ATP synthase activity, rotational mechanism"/>
    <property type="evidence" value="ECO:0007669"/>
    <property type="project" value="UniProtKB-UniRule"/>
</dbReference>
<dbReference type="CDD" id="cd18110">
    <property type="entry name" value="ATP-synt_F1_beta_C"/>
    <property type="match status" value="1"/>
</dbReference>
<dbReference type="CDD" id="cd18115">
    <property type="entry name" value="ATP-synt_F1_beta_N"/>
    <property type="match status" value="1"/>
</dbReference>
<dbReference type="CDD" id="cd01133">
    <property type="entry name" value="F1-ATPase_beta_CD"/>
    <property type="match status" value="1"/>
</dbReference>
<dbReference type="FunFam" id="1.10.1140.10:FF:000001">
    <property type="entry name" value="ATP synthase subunit beta"/>
    <property type="match status" value="1"/>
</dbReference>
<dbReference type="FunFam" id="3.40.50.300:FF:000004">
    <property type="entry name" value="ATP synthase subunit beta"/>
    <property type="match status" value="1"/>
</dbReference>
<dbReference type="Gene3D" id="2.40.10.170">
    <property type="match status" value="1"/>
</dbReference>
<dbReference type="Gene3D" id="1.10.1140.10">
    <property type="entry name" value="Bovine Mitochondrial F1-atpase, Atp Synthase Beta Chain, Chain D, domain 3"/>
    <property type="match status" value="1"/>
</dbReference>
<dbReference type="Gene3D" id="3.40.50.300">
    <property type="entry name" value="P-loop containing nucleotide triphosphate hydrolases"/>
    <property type="match status" value="1"/>
</dbReference>
<dbReference type="HAMAP" id="MF_01347">
    <property type="entry name" value="ATP_synth_beta_bact"/>
    <property type="match status" value="1"/>
</dbReference>
<dbReference type="InterPro" id="IPR003593">
    <property type="entry name" value="AAA+_ATPase"/>
</dbReference>
<dbReference type="InterPro" id="IPR055190">
    <property type="entry name" value="ATP-synt_VA_C"/>
</dbReference>
<dbReference type="InterPro" id="IPR005722">
    <property type="entry name" value="ATP_synth_F1_bsu"/>
</dbReference>
<dbReference type="InterPro" id="IPR020003">
    <property type="entry name" value="ATPase_a/bsu_AS"/>
</dbReference>
<dbReference type="InterPro" id="IPR050053">
    <property type="entry name" value="ATPase_alpha/beta_chains"/>
</dbReference>
<dbReference type="InterPro" id="IPR004100">
    <property type="entry name" value="ATPase_F1/V1/A1_a/bsu_N"/>
</dbReference>
<dbReference type="InterPro" id="IPR036121">
    <property type="entry name" value="ATPase_F1/V1/A1_a/bsu_N_sf"/>
</dbReference>
<dbReference type="InterPro" id="IPR000194">
    <property type="entry name" value="ATPase_F1/V1/A1_a/bsu_nucl-bd"/>
</dbReference>
<dbReference type="InterPro" id="IPR024034">
    <property type="entry name" value="ATPase_F1/V1_b/a_C"/>
</dbReference>
<dbReference type="InterPro" id="IPR027417">
    <property type="entry name" value="P-loop_NTPase"/>
</dbReference>
<dbReference type="NCBIfam" id="TIGR01039">
    <property type="entry name" value="atpD"/>
    <property type="match status" value="1"/>
</dbReference>
<dbReference type="PANTHER" id="PTHR15184">
    <property type="entry name" value="ATP SYNTHASE"/>
    <property type="match status" value="1"/>
</dbReference>
<dbReference type="PANTHER" id="PTHR15184:SF71">
    <property type="entry name" value="ATP SYNTHASE SUBUNIT BETA, MITOCHONDRIAL"/>
    <property type="match status" value="1"/>
</dbReference>
<dbReference type="Pfam" id="PF00006">
    <property type="entry name" value="ATP-synt_ab"/>
    <property type="match status" value="1"/>
</dbReference>
<dbReference type="Pfam" id="PF02874">
    <property type="entry name" value="ATP-synt_ab_N"/>
    <property type="match status" value="1"/>
</dbReference>
<dbReference type="Pfam" id="PF22919">
    <property type="entry name" value="ATP-synt_VA_C"/>
    <property type="match status" value="1"/>
</dbReference>
<dbReference type="SMART" id="SM00382">
    <property type="entry name" value="AAA"/>
    <property type="match status" value="1"/>
</dbReference>
<dbReference type="SUPFAM" id="SSF47917">
    <property type="entry name" value="C-terminal domain of alpha and beta subunits of F1 ATP synthase"/>
    <property type="match status" value="1"/>
</dbReference>
<dbReference type="SUPFAM" id="SSF50615">
    <property type="entry name" value="N-terminal domain of alpha and beta subunits of F1 ATP synthase"/>
    <property type="match status" value="1"/>
</dbReference>
<dbReference type="SUPFAM" id="SSF52540">
    <property type="entry name" value="P-loop containing nucleoside triphosphate hydrolases"/>
    <property type="match status" value="1"/>
</dbReference>
<dbReference type="PROSITE" id="PS00152">
    <property type="entry name" value="ATPASE_ALPHA_BETA"/>
    <property type="match status" value="1"/>
</dbReference>
<evidence type="ECO:0000255" key="1">
    <source>
        <dbReference type="HAMAP-Rule" id="MF_01347"/>
    </source>
</evidence>
<proteinExistence type="inferred from homology"/>
<feature type="chain" id="PRO_0000254346" description="ATP synthase subunit beta">
    <location>
        <begin position="1"/>
        <end position="477"/>
    </location>
</feature>
<feature type="binding site" evidence="1">
    <location>
        <begin position="148"/>
        <end position="155"/>
    </location>
    <ligand>
        <name>ATP</name>
        <dbReference type="ChEBI" id="CHEBI:30616"/>
    </ligand>
</feature>